<feature type="chain" id="PRO_0000407735" description="Cell number regulator 7">
    <location>
        <begin position="1"/>
        <end position="180"/>
    </location>
</feature>
<feature type="transmembrane region" description="Helical" evidence="1">
    <location>
        <begin position="80"/>
        <end position="102"/>
    </location>
</feature>
<feature type="sequence conflict" description="In Ref. 2; ACG40115." evidence="3" ref="2">
    <original>V</original>
    <variation>I</variation>
    <location>
        <position position="71"/>
    </location>
</feature>
<keyword id="KW-0472">Membrane</keyword>
<keyword id="KW-1185">Reference proteome</keyword>
<keyword id="KW-0812">Transmembrane</keyword>
<keyword id="KW-1133">Transmembrane helix</keyword>
<accession>D9HP23</accession>
<accession>B6TSN2</accession>
<name>CNR7_MAIZE</name>
<sequence>MYPAKPTVATASEPVTGMAAPPVTGIPISSPGPAVAASQWSSGLCACFDDCGLCCMTCWCPCVTFGRIAEVVDRGATSCAAAGAIYTLLACFTGFQCHWIYSCTYRSKMRAQLGLPDVGCCDCCVHFCCEPCALCQQYRELRARGLDPALGWDVNAQKAANNNAGAGMTMYPPTAQGMGR</sequence>
<evidence type="ECO:0000255" key="1"/>
<evidence type="ECO:0000269" key="2">
    <source>
    </source>
</evidence>
<evidence type="ECO:0000305" key="3"/>
<gene>
    <name type="primary">CNR7</name>
</gene>
<dbReference type="EMBL" id="HM008659">
    <property type="protein sequence ID" value="ADI48421.1"/>
    <property type="molecule type" value="mRNA"/>
</dbReference>
<dbReference type="EMBL" id="EU967997">
    <property type="protein sequence ID" value="ACG40115.1"/>
    <property type="molecule type" value="mRNA"/>
</dbReference>
<dbReference type="RefSeq" id="NP_001150718.1">
    <property type="nucleotide sequence ID" value="NM_001157246.1"/>
</dbReference>
<dbReference type="FunCoup" id="D9HP23">
    <property type="interactions" value="10"/>
</dbReference>
<dbReference type="STRING" id="4577.D9HP23"/>
<dbReference type="PaxDb" id="4577-GRMZM2G119755_P01"/>
<dbReference type="EnsemblPlants" id="Zm00001eb063530_T001">
    <property type="protein sequence ID" value="Zm00001eb063530_P001"/>
    <property type="gene ID" value="Zm00001eb063530"/>
</dbReference>
<dbReference type="GeneID" id="100284351"/>
<dbReference type="Gramene" id="Zm00001eb063530_T001">
    <property type="protein sequence ID" value="Zm00001eb063530_P001"/>
    <property type="gene ID" value="Zm00001eb063530"/>
</dbReference>
<dbReference type="KEGG" id="zma:100284351"/>
<dbReference type="eggNOG" id="ENOG502S7UD">
    <property type="taxonomic scope" value="Eukaryota"/>
</dbReference>
<dbReference type="HOGENOM" id="CLU_083147_1_1_1"/>
<dbReference type="InParanoid" id="D9HP23"/>
<dbReference type="OMA" id="CACCELM"/>
<dbReference type="OrthoDB" id="1045822at2759"/>
<dbReference type="Proteomes" id="UP000007305">
    <property type="component" value="Chromosome 1"/>
</dbReference>
<dbReference type="ExpressionAtlas" id="D9HP23">
    <property type="expression patterns" value="baseline and differential"/>
</dbReference>
<dbReference type="GO" id="GO:0016020">
    <property type="term" value="C:membrane"/>
    <property type="evidence" value="ECO:0007669"/>
    <property type="project" value="UniProtKB-SubCell"/>
</dbReference>
<dbReference type="InterPro" id="IPR006461">
    <property type="entry name" value="PLAC_motif_containing"/>
</dbReference>
<dbReference type="NCBIfam" id="TIGR01571">
    <property type="entry name" value="A_thal_Cys_rich"/>
    <property type="match status" value="1"/>
</dbReference>
<dbReference type="PANTHER" id="PTHR15907">
    <property type="entry name" value="DUF614 FAMILY PROTEIN-RELATED"/>
    <property type="match status" value="1"/>
</dbReference>
<dbReference type="Pfam" id="PF04749">
    <property type="entry name" value="PLAC8"/>
    <property type="match status" value="1"/>
</dbReference>
<proteinExistence type="evidence at transcript level"/>
<comment type="subcellular location">
    <subcellularLocation>
        <location evidence="3">Membrane</location>
        <topology evidence="3">Single-pass membrane protein</topology>
    </subcellularLocation>
</comment>
<comment type="tissue specificity">
    <text evidence="2">Expressed in roots, leaves, immature ears and silks. Detected preferentially in silks.</text>
</comment>
<comment type="similarity">
    <text evidence="3">Belongs to the cornifelin family.</text>
</comment>
<organism>
    <name type="scientific">Zea mays</name>
    <name type="common">Maize</name>
    <dbReference type="NCBI Taxonomy" id="4577"/>
    <lineage>
        <taxon>Eukaryota</taxon>
        <taxon>Viridiplantae</taxon>
        <taxon>Streptophyta</taxon>
        <taxon>Embryophyta</taxon>
        <taxon>Tracheophyta</taxon>
        <taxon>Spermatophyta</taxon>
        <taxon>Magnoliopsida</taxon>
        <taxon>Liliopsida</taxon>
        <taxon>Poales</taxon>
        <taxon>Poaceae</taxon>
        <taxon>PACMAD clade</taxon>
        <taxon>Panicoideae</taxon>
        <taxon>Andropogonodae</taxon>
        <taxon>Andropogoneae</taxon>
        <taxon>Tripsacinae</taxon>
        <taxon>Zea</taxon>
    </lineage>
</organism>
<protein>
    <recommendedName>
        <fullName>Cell number regulator 7</fullName>
    </recommendedName>
    <alternativeName>
        <fullName>ZmCNR07</fullName>
    </alternativeName>
</protein>
<reference key="1">
    <citation type="journal article" date="2010" name="Plant Cell">
        <title>Cell Number Regulator1 affects plant and organ size in maize: implications for crop yield enhancement and heterosis.</title>
        <authorList>
            <person name="Guo M."/>
            <person name="Rupe M.A."/>
            <person name="Dieter J.A."/>
            <person name="Zou J."/>
            <person name="Spielbauer D."/>
            <person name="Duncan K.E."/>
            <person name="Howard R.J."/>
            <person name="Hou Z."/>
            <person name="Simmons C.R."/>
        </authorList>
    </citation>
    <scope>NUCLEOTIDE SEQUENCE [MRNA]</scope>
    <scope>TISSUE SPECIFICITY</scope>
    <scope>GENE FAMILY</scope>
    <scope>NOMENCLATURE</scope>
    <source>
        <strain>cv. B73</strain>
    </source>
</reference>
<reference key="2">
    <citation type="journal article" date="2009" name="Plant Mol. Biol.">
        <title>Insights into corn genes derived from large-scale cDNA sequencing.</title>
        <authorList>
            <person name="Alexandrov N.N."/>
            <person name="Brover V.V."/>
            <person name="Freidin S."/>
            <person name="Troukhan M.E."/>
            <person name="Tatarinova T.V."/>
            <person name="Zhang H."/>
            <person name="Swaller T.J."/>
            <person name="Lu Y.-P."/>
            <person name="Bouck J."/>
            <person name="Flavell R.B."/>
            <person name="Feldmann K.A."/>
        </authorList>
    </citation>
    <scope>NUCLEOTIDE SEQUENCE [LARGE SCALE MRNA]</scope>
</reference>